<gene>
    <name evidence="1" type="primary">rpl14</name>
</gene>
<name>RK14_CHLRE</name>
<evidence type="ECO:0000255" key="1">
    <source>
        <dbReference type="HAMAP-Rule" id="MF_01367"/>
    </source>
</evidence>
<evidence type="ECO:0000305" key="2"/>
<geneLocation type="chloroplast"/>
<proteinExistence type="inferred from homology"/>
<feature type="chain" id="PRO_0000128584" description="Large ribosomal subunit protein uL14c">
    <location>
        <begin position="1"/>
        <end position="122"/>
    </location>
</feature>
<protein>
    <recommendedName>
        <fullName evidence="1">Large ribosomal subunit protein uL14c</fullName>
    </recommendedName>
    <alternativeName>
        <fullName evidence="2">50S ribosomal protein L14, chloroplastic</fullName>
    </alternativeName>
</protein>
<comment type="function">
    <text evidence="1">Binds to 23S rRNA.</text>
</comment>
<comment type="subunit">
    <text evidence="1">Part of the 50S ribosomal subunit.</text>
</comment>
<comment type="subcellular location">
    <subcellularLocation>
        <location>Plastid</location>
        <location>Chloroplast</location>
    </subcellularLocation>
</comment>
<comment type="similarity">
    <text evidence="1">Belongs to the universal ribosomal protein uL14 family.</text>
</comment>
<keyword id="KW-0150">Chloroplast</keyword>
<keyword id="KW-0934">Plastid</keyword>
<keyword id="KW-1185">Reference proteome</keyword>
<keyword id="KW-0687">Ribonucleoprotein</keyword>
<keyword id="KW-0689">Ribosomal protein</keyword>
<keyword id="KW-0694">RNA-binding</keyword>
<keyword id="KW-0699">rRNA-binding</keyword>
<organism>
    <name type="scientific">Chlamydomonas reinhardtii</name>
    <name type="common">Chlamydomonas smithii</name>
    <dbReference type="NCBI Taxonomy" id="3055"/>
    <lineage>
        <taxon>Eukaryota</taxon>
        <taxon>Viridiplantae</taxon>
        <taxon>Chlorophyta</taxon>
        <taxon>core chlorophytes</taxon>
        <taxon>Chlorophyceae</taxon>
        <taxon>CS clade</taxon>
        <taxon>Chlamydomonadales</taxon>
        <taxon>Chlamydomonadaceae</taxon>
        <taxon>Chlamydomonas</taxon>
    </lineage>
</organism>
<accession>P11094</accession>
<accession>B7U1F8</accession>
<reference key="1">
    <citation type="journal article" date="1989" name="Nucleic Acids Res.">
        <title>Nucleotide sequence of the chloroplast ribosomal protein gene L14 in Chlamydomonas reinhardtii.</title>
        <authorList>
            <person name="Lou J.K."/>
            <person name="Cruz F.D."/>
            <person name="Wu M."/>
        </authorList>
    </citation>
    <scope>NUCLEOTIDE SEQUENCE [GENOMIC DNA]</scope>
    <source>
        <strain>137c / CC-125</strain>
    </source>
</reference>
<reference key="2">
    <citation type="journal article" date="2009" name="BMC Evol. Biol.">
        <title>Nucleotide diversity of the Chlamydomonas reinhardtii plastid genome: addressing the mutational-hazard hypothesis.</title>
        <authorList>
            <person name="Smith D.R."/>
            <person name="Lee R.W."/>
        </authorList>
    </citation>
    <scope>NUCLEOTIDE SEQUENCE [LARGE SCALE GENOMIC DNA]</scope>
    <source>
        <strain>CC-503</strain>
    </source>
</reference>
<reference key="3">
    <citation type="journal article" date="2002" name="Plant Cell">
        <title>The Chlamydomonas reinhardtii plastid chromosome: islands of genes in a sea of repeats.</title>
        <authorList>
            <person name="Maul J.E."/>
            <person name="Lilly J.W."/>
            <person name="Cui L."/>
            <person name="dePamphilis C.W."/>
            <person name="Miller W."/>
            <person name="Harris E.H."/>
            <person name="Stern D.B."/>
        </authorList>
    </citation>
    <scope>IDENTIFICATION</scope>
    <scope>COMPLETE PLASTID GENOME</scope>
</reference>
<sequence>MIKPLSYLNVADNSGARELMCIRALGGSYRESANIGDVIIAVVKDALPNMPVKRSDIVRAVIVRTRKGIRRENGMAIRFDDNAAVIINKEGNPRGTRVFGPIARELRDKNFTKIVSLAPEVL</sequence>
<dbReference type="EMBL" id="X14062">
    <property type="protein sequence ID" value="CAA32226.1"/>
    <property type="molecule type" value="Genomic_DNA"/>
</dbReference>
<dbReference type="EMBL" id="FJ423446">
    <property type="protein sequence ID" value="ACJ50105.1"/>
    <property type="molecule type" value="Genomic_DNA"/>
</dbReference>
<dbReference type="EMBL" id="BK000554">
    <property type="protein sequence ID" value="DAA00918.1"/>
    <property type="molecule type" value="Genomic_DNA"/>
</dbReference>
<dbReference type="PIR" id="S04093">
    <property type="entry name" value="R5KM14"/>
</dbReference>
<dbReference type="RefSeq" id="NP_958372.1">
    <property type="nucleotide sequence ID" value="NC_005353.1"/>
</dbReference>
<dbReference type="SMR" id="P11094"/>
<dbReference type="FunCoup" id="P11094">
    <property type="interactions" value="341"/>
</dbReference>
<dbReference type="STRING" id="3055.P11094"/>
<dbReference type="PaxDb" id="3055-DAA00918"/>
<dbReference type="GeneID" id="2717058"/>
<dbReference type="KEGG" id="cre:ChreCp015"/>
<dbReference type="eggNOG" id="KOG0901">
    <property type="taxonomic scope" value="Eukaryota"/>
</dbReference>
<dbReference type="HOGENOM" id="CLU_095071_2_1_1"/>
<dbReference type="InParanoid" id="P11094"/>
<dbReference type="Proteomes" id="UP000006906">
    <property type="component" value="Chloroplast"/>
</dbReference>
<dbReference type="GO" id="GO:0009507">
    <property type="term" value="C:chloroplast"/>
    <property type="evidence" value="ECO:0007669"/>
    <property type="project" value="UniProtKB-SubCell"/>
</dbReference>
<dbReference type="GO" id="GO:0022625">
    <property type="term" value="C:cytosolic large ribosomal subunit"/>
    <property type="evidence" value="ECO:0000318"/>
    <property type="project" value="GO_Central"/>
</dbReference>
<dbReference type="GO" id="GO:0070180">
    <property type="term" value="F:large ribosomal subunit rRNA binding"/>
    <property type="evidence" value="ECO:0000318"/>
    <property type="project" value="GO_Central"/>
</dbReference>
<dbReference type="GO" id="GO:0003735">
    <property type="term" value="F:structural constituent of ribosome"/>
    <property type="evidence" value="ECO:0000318"/>
    <property type="project" value="GO_Central"/>
</dbReference>
<dbReference type="GO" id="GO:0006412">
    <property type="term" value="P:translation"/>
    <property type="evidence" value="ECO:0007669"/>
    <property type="project" value="UniProtKB-UniRule"/>
</dbReference>
<dbReference type="CDD" id="cd00337">
    <property type="entry name" value="Ribosomal_uL14"/>
    <property type="match status" value="1"/>
</dbReference>
<dbReference type="FunFam" id="2.40.150.20:FF:000001">
    <property type="entry name" value="50S ribosomal protein L14"/>
    <property type="match status" value="1"/>
</dbReference>
<dbReference type="Gene3D" id="2.40.150.20">
    <property type="entry name" value="Ribosomal protein L14"/>
    <property type="match status" value="1"/>
</dbReference>
<dbReference type="HAMAP" id="MF_01367">
    <property type="entry name" value="Ribosomal_uL14"/>
    <property type="match status" value="1"/>
</dbReference>
<dbReference type="InterPro" id="IPR000218">
    <property type="entry name" value="Ribosomal_uL14"/>
</dbReference>
<dbReference type="InterPro" id="IPR005745">
    <property type="entry name" value="Ribosomal_uL14_bac-type"/>
</dbReference>
<dbReference type="InterPro" id="IPR019972">
    <property type="entry name" value="Ribosomal_uL14_CS"/>
</dbReference>
<dbReference type="InterPro" id="IPR036853">
    <property type="entry name" value="Ribosomal_uL14_sf"/>
</dbReference>
<dbReference type="NCBIfam" id="TIGR01067">
    <property type="entry name" value="rplN_bact"/>
    <property type="match status" value="1"/>
</dbReference>
<dbReference type="PANTHER" id="PTHR11761">
    <property type="entry name" value="50S/60S RIBOSOMAL PROTEIN L14/L23"/>
    <property type="match status" value="1"/>
</dbReference>
<dbReference type="PANTHER" id="PTHR11761:SF3">
    <property type="entry name" value="LARGE RIBOSOMAL SUBUNIT PROTEIN UL14M"/>
    <property type="match status" value="1"/>
</dbReference>
<dbReference type="Pfam" id="PF00238">
    <property type="entry name" value="Ribosomal_L14"/>
    <property type="match status" value="1"/>
</dbReference>
<dbReference type="SMART" id="SM01374">
    <property type="entry name" value="Ribosomal_L14"/>
    <property type="match status" value="1"/>
</dbReference>
<dbReference type="SUPFAM" id="SSF50193">
    <property type="entry name" value="Ribosomal protein L14"/>
    <property type="match status" value="1"/>
</dbReference>
<dbReference type="PROSITE" id="PS00049">
    <property type="entry name" value="RIBOSOMAL_L14"/>
    <property type="match status" value="1"/>
</dbReference>